<comment type="function">
    <text evidence="1 4 5 6">Probably acts as a transcriptional activator. May be involved in the regulation of gene expression by stress factors and by components of stress signal transduction pathways (By similarity). Involved in the control of cell division patterns during the early lateral root primordium development. Acts downstream of auxin signaling (PubMed:17630277). Regulated by ARF7 and ARF19 in response to auxin. Co-acts with LBD16 and LBD18 to control lateral root development (PubMed:23749813). Involved in the determination of floral meristem identity and suppression of bract growth. Required for proper conversion of secondary inflorescences to flowers. Acts together with NPR5/BOP2 and NPR6/BOP1 to promote expression of LFY and AP1, two central regulators of floral meristem identity (PubMed:19482972).</text>
</comment>
<comment type="interaction">
    <interactant intactId="EBI-15202888">
        <id>Q6J9Q2</id>
    </interactant>
    <interactant intactId="EBI-2000137">
        <id>Q9MAI5</id>
        <label>ERF8</label>
    </interactant>
    <organismsDiffer>false</organismsDiffer>
    <experiments>3</experiments>
</comment>
<comment type="interaction">
    <interactant intactId="EBI-15202888">
        <id>Q6J9Q2</id>
    </interactant>
    <interactant intactId="EBI-3946459">
        <id>Q9C5X0</id>
        <label>IAA34</label>
    </interactant>
    <organismsDiffer>false</organismsDiffer>
    <experiments>3</experiments>
</comment>
<comment type="subcellular location">
    <subcellularLocation>
        <location evidence="4">Nucleus</location>
    </subcellularLocation>
</comment>
<comment type="developmental stage">
    <text evidence="4 5">Expressed in the early stages of lateral root primordia formation (PubMed:17630277). Expressed in early floral meristem (stage 1 to 2) (PubMed:19482972).</text>
</comment>
<comment type="induction">
    <text evidence="4 6">By auxin.</text>
</comment>
<comment type="disruption phenotype">
    <text evidence="4 5">Disturbed cell division patterns in lateral root primordia leading to the expansion of the proximal region of lateral roots. Short lateral roots in young seedlings (PubMed:17630277). In the shoot, formation of small pin-shaped protrusions at the base of pedicels (PubMed:17630277, PubMed:19482972).</text>
</comment>
<comment type="similarity">
    <text evidence="9">Belongs to the AP2/ERF transcription factor family. ERF subfamily.</text>
</comment>
<protein>
    <recommendedName>
        <fullName>Ethylene-responsive transcription factor ERF086</fullName>
    </recommendedName>
</protein>
<dbReference type="EMBL" id="AC069328">
    <property type="status" value="NOT_ANNOTATED_CDS"/>
    <property type="molecule type" value="Genomic_DNA"/>
</dbReference>
<dbReference type="EMBL" id="CP002688">
    <property type="protein sequence ID" value="AED92579.1"/>
    <property type="molecule type" value="Genomic_DNA"/>
</dbReference>
<dbReference type="EMBL" id="AY560873">
    <property type="protein sequence ID" value="AAT44940.1"/>
    <property type="molecule type" value="mRNA"/>
</dbReference>
<dbReference type="RefSeq" id="NP_197357.2">
    <property type="nucleotide sequence ID" value="NM_121861.3"/>
</dbReference>
<dbReference type="SMR" id="Q6J9Q2"/>
<dbReference type="BioGRID" id="17250">
    <property type="interactions" value="15"/>
</dbReference>
<dbReference type="FunCoup" id="Q6J9Q2">
    <property type="interactions" value="24"/>
</dbReference>
<dbReference type="IntAct" id="Q6J9Q2">
    <property type="interactions" value="16"/>
</dbReference>
<dbReference type="STRING" id="3702.Q6J9Q2"/>
<dbReference type="PaxDb" id="3702-AT5G18560.1"/>
<dbReference type="ProteomicsDB" id="220630"/>
<dbReference type="EnsemblPlants" id="AT5G18560.1">
    <property type="protein sequence ID" value="AT5G18560.1"/>
    <property type="gene ID" value="AT5G18560"/>
</dbReference>
<dbReference type="GeneID" id="831974"/>
<dbReference type="Gramene" id="AT5G18560.1">
    <property type="protein sequence ID" value="AT5G18560.1"/>
    <property type="gene ID" value="AT5G18560"/>
</dbReference>
<dbReference type="KEGG" id="ath:AT5G18560"/>
<dbReference type="Araport" id="AT5G18560"/>
<dbReference type="TAIR" id="AT5G18560">
    <property type="gene designation" value="PUCHI"/>
</dbReference>
<dbReference type="eggNOG" id="ENOG502QQPC">
    <property type="taxonomic scope" value="Eukaryota"/>
</dbReference>
<dbReference type="HOGENOM" id="CLU_073466_1_0_1"/>
<dbReference type="InParanoid" id="Q6J9Q2"/>
<dbReference type="OMA" id="IMEPQNF"/>
<dbReference type="PRO" id="PR:Q6J9Q2"/>
<dbReference type="Proteomes" id="UP000006548">
    <property type="component" value="Chromosome 5"/>
</dbReference>
<dbReference type="ExpressionAtlas" id="Q6J9Q2">
    <property type="expression patterns" value="baseline and differential"/>
</dbReference>
<dbReference type="GO" id="GO:0005634">
    <property type="term" value="C:nucleus"/>
    <property type="evidence" value="ECO:0000314"/>
    <property type="project" value="TAIR"/>
</dbReference>
<dbReference type="GO" id="GO:0003700">
    <property type="term" value="F:DNA-binding transcription factor activity"/>
    <property type="evidence" value="ECO:0000250"/>
    <property type="project" value="TAIR"/>
</dbReference>
<dbReference type="GO" id="GO:0000976">
    <property type="term" value="F:transcription cis-regulatory region binding"/>
    <property type="evidence" value="ECO:0000353"/>
    <property type="project" value="TAIR"/>
</dbReference>
<dbReference type="GO" id="GO:0010432">
    <property type="term" value="P:bract development"/>
    <property type="evidence" value="ECO:0000315"/>
    <property type="project" value="TAIR"/>
</dbReference>
<dbReference type="GO" id="GO:0009873">
    <property type="term" value="P:ethylene-activated signaling pathway"/>
    <property type="evidence" value="ECO:0007669"/>
    <property type="project" value="UniProtKB-KW"/>
</dbReference>
<dbReference type="GO" id="GO:0010582">
    <property type="term" value="P:floral meristem determinacy"/>
    <property type="evidence" value="ECO:0000315"/>
    <property type="project" value="TAIR"/>
</dbReference>
<dbReference type="GO" id="GO:0010451">
    <property type="term" value="P:floral meristem growth"/>
    <property type="evidence" value="ECO:0000315"/>
    <property type="project" value="TAIR"/>
</dbReference>
<dbReference type="GO" id="GO:0009908">
    <property type="term" value="P:flower development"/>
    <property type="evidence" value="ECO:0000315"/>
    <property type="project" value="TAIR"/>
</dbReference>
<dbReference type="GO" id="GO:0010102">
    <property type="term" value="P:lateral root morphogenesis"/>
    <property type="evidence" value="ECO:0000315"/>
    <property type="project" value="TAIR"/>
</dbReference>
<dbReference type="GO" id="GO:1901332">
    <property type="term" value="P:negative regulation of lateral root development"/>
    <property type="evidence" value="ECO:0000316"/>
    <property type="project" value="TAIR"/>
</dbReference>
<dbReference type="CDD" id="cd00018">
    <property type="entry name" value="AP2"/>
    <property type="match status" value="1"/>
</dbReference>
<dbReference type="FunFam" id="3.30.730.10:FF:000001">
    <property type="entry name" value="Ethylene-responsive transcription factor 2"/>
    <property type="match status" value="1"/>
</dbReference>
<dbReference type="Gene3D" id="3.30.730.10">
    <property type="entry name" value="AP2/ERF domain"/>
    <property type="match status" value="1"/>
</dbReference>
<dbReference type="InterPro" id="IPR001471">
    <property type="entry name" value="AP2/ERF_dom"/>
</dbReference>
<dbReference type="InterPro" id="IPR036955">
    <property type="entry name" value="AP2/ERF_dom_sf"/>
</dbReference>
<dbReference type="InterPro" id="IPR016177">
    <property type="entry name" value="DNA-bd_dom_sf"/>
</dbReference>
<dbReference type="PANTHER" id="PTHR31677">
    <property type="entry name" value="AP2 DOMAIN CLASS TRANSCRIPTION FACTOR"/>
    <property type="match status" value="1"/>
</dbReference>
<dbReference type="PANTHER" id="PTHR31677:SF49">
    <property type="entry name" value="ETHYLENE-RESPONSIVE TRANSCRIPTION FACTOR ERF086"/>
    <property type="match status" value="1"/>
</dbReference>
<dbReference type="Pfam" id="PF00847">
    <property type="entry name" value="AP2"/>
    <property type="match status" value="1"/>
</dbReference>
<dbReference type="PRINTS" id="PR00367">
    <property type="entry name" value="ETHRSPELEMNT"/>
</dbReference>
<dbReference type="SMART" id="SM00380">
    <property type="entry name" value="AP2"/>
    <property type="match status" value="1"/>
</dbReference>
<dbReference type="SUPFAM" id="SSF54171">
    <property type="entry name" value="DNA-binding domain"/>
    <property type="match status" value="1"/>
</dbReference>
<dbReference type="PROSITE" id="PS51032">
    <property type="entry name" value="AP2_ERF"/>
    <property type="match status" value="1"/>
</dbReference>
<proteinExistence type="evidence at protein level"/>
<sequence length="348" mass="38455">MSTSKTLDHNKPFETSQTQMGFALIHQNTSANTTTTTTTGERRGRRSKQAEPGRFLGVRRRPWGRYAAEIRDPTTKERHWLGTFDTAHEAALAYDRAALSMRGTQARTNFVYTPTDVHTILTNPNLHSLIVSPYNNNQSFLPNSSPQFVIDHHPHYQNYHQPQQPKHTLPQTVLPAASFKTPVRHQSVDIQAFGNSPQNSSSNGSLSSSLDEENNFFFSLTSEEHNKSNNNSGYLDCIVPNHCLKPPPEATTTQNQAGASFTTPVASKASEPYGGFSNSYFEDGEMMMMNHHEFGSCDLSAMITNYGAAAASMSMEDYGMMEPQDLSSSSIAAFGDVVADTTGFYSVF</sequence>
<feature type="chain" id="PRO_0000290409" description="Ethylene-responsive transcription factor ERF086">
    <location>
        <begin position="1"/>
        <end position="348"/>
    </location>
</feature>
<feature type="DNA-binding region" description="AP2/ERF" evidence="2">
    <location>
        <begin position="54"/>
        <end position="111"/>
    </location>
</feature>
<feature type="region of interest" description="Disordered" evidence="3">
    <location>
        <begin position="29"/>
        <end position="53"/>
    </location>
</feature>
<evidence type="ECO:0000250" key="1">
    <source>
        <dbReference type="UniProtKB" id="Q9LND1"/>
    </source>
</evidence>
<evidence type="ECO:0000255" key="2">
    <source>
        <dbReference type="PROSITE-ProRule" id="PRU00366"/>
    </source>
</evidence>
<evidence type="ECO:0000256" key="3">
    <source>
        <dbReference type="SAM" id="MobiDB-lite"/>
    </source>
</evidence>
<evidence type="ECO:0000269" key="4">
    <source>
    </source>
</evidence>
<evidence type="ECO:0000269" key="5">
    <source>
    </source>
</evidence>
<evidence type="ECO:0000269" key="6">
    <source>
    </source>
</evidence>
<evidence type="ECO:0000303" key="7">
    <source>
    </source>
</evidence>
<evidence type="ECO:0000303" key="8">
    <source>
    </source>
</evidence>
<evidence type="ECO:0000305" key="9"/>
<gene>
    <name evidence="7" type="primary">ERF086</name>
    <name evidence="8" type="synonym">PUCHI</name>
    <name type="ordered locus">At5g18560</name>
    <name type="ORF">T28N17.40</name>
</gene>
<organism>
    <name type="scientific">Arabidopsis thaliana</name>
    <name type="common">Mouse-ear cress</name>
    <dbReference type="NCBI Taxonomy" id="3702"/>
    <lineage>
        <taxon>Eukaryota</taxon>
        <taxon>Viridiplantae</taxon>
        <taxon>Streptophyta</taxon>
        <taxon>Embryophyta</taxon>
        <taxon>Tracheophyta</taxon>
        <taxon>Spermatophyta</taxon>
        <taxon>Magnoliopsida</taxon>
        <taxon>eudicotyledons</taxon>
        <taxon>Gunneridae</taxon>
        <taxon>Pentapetalae</taxon>
        <taxon>rosids</taxon>
        <taxon>malvids</taxon>
        <taxon>Brassicales</taxon>
        <taxon>Brassicaceae</taxon>
        <taxon>Camelineae</taxon>
        <taxon>Arabidopsis</taxon>
    </lineage>
</organism>
<keyword id="KW-0010">Activator</keyword>
<keyword id="KW-0238">DNA-binding</keyword>
<keyword id="KW-0936">Ethylene signaling pathway</keyword>
<keyword id="KW-0539">Nucleus</keyword>
<keyword id="KW-1185">Reference proteome</keyword>
<keyword id="KW-0804">Transcription</keyword>
<keyword id="KW-0805">Transcription regulation</keyword>
<accession>Q6J9Q2</accession>
<name>ERF86_ARATH</name>
<reference key="1">
    <citation type="journal article" date="2000" name="Nature">
        <title>Sequence and analysis of chromosome 5 of the plant Arabidopsis thaliana.</title>
        <authorList>
            <person name="Tabata S."/>
            <person name="Kaneko T."/>
            <person name="Nakamura Y."/>
            <person name="Kotani H."/>
            <person name="Kato T."/>
            <person name="Asamizu E."/>
            <person name="Miyajima N."/>
            <person name="Sasamoto S."/>
            <person name="Kimura T."/>
            <person name="Hosouchi T."/>
            <person name="Kawashima K."/>
            <person name="Kohara M."/>
            <person name="Matsumoto M."/>
            <person name="Matsuno A."/>
            <person name="Muraki A."/>
            <person name="Nakayama S."/>
            <person name="Nakazaki N."/>
            <person name="Naruo K."/>
            <person name="Okumura S."/>
            <person name="Shinpo S."/>
            <person name="Takeuchi C."/>
            <person name="Wada T."/>
            <person name="Watanabe A."/>
            <person name="Yamada M."/>
            <person name="Yasuda M."/>
            <person name="Sato S."/>
            <person name="de la Bastide M."/>
            <person name="Huang E."/>
            <person name="Spiegel L."/>
            <person name="Gnoj L."/>
            <person name="O'Shaughnessy A."/>
            <person name="Preston R."/>
            <person name="Habermann K."/>
            <person name="Murray J."/>
            <person name="Johnson D."/>
            <person name="Rohlfing T."/>
            <person name="Nelson J."/>
            <person name="Stoneking T."/>
            <person name="Pepin K."/>
            <person name="Spieth J."/>
            <person name="Sekhon M."/>
            <person name="Armstrong J."/>
            <person name="Becker M."/>
            <person name="Belter E."/>
            <person name="Cordum H."/>
            <person name="Cordes M."/>
            <person name="Courtney L."/>
            <person name="Courtney W."/>
            <person name="Dante M."/>
            <person name="Du H."/>
            <person name="Edwards J."/>
            <person name="Fryman J."/>
            <person name="Haakensen B."/>
            <person name="Lamar E."/>
            <person name="Latreille P."/>
            <person name="Leonard S."/>
            <person name="Meyer R."/>
            <person name="Mulvaney E."/>
            <person name="Ozersky P."/>
            <person name="Riley A."/>
            <person name="Strowmatt C."/>
            <person name="Wagner-McPherson C."/>
            <person name="Wollam A."/>
            <person name="Yoakum M."/>
            <person name="Bell M."/>
            <person name="Dedhia N."/>
            <person name="Parnell L."/>
            <person name="Shah R."/>
            <person name="Rodriguez M."/>
            <person name="Hoon See L."/>
            <person name="Vil D."/>
            <person name="Baker J."/>
            <person name="Kirchoff K."/>
            <person name="Toth K."/>
            <person name="King L."/>
            <person name="Bahret A."/>
            <person name="Miller B."/>
            <person name="Marra M.A."/>
            <person name="Martienssen R."/>
            <person name="McCombie W.R."/>
            <person name="Wilson R.K."/>
            <person name="Murphy G."/>
            <person name="Bancroft I."/>
            <person name="Volckaert G."/>
            <person name="Wambutt R."/>
            <person name="Duesterhoeft A."/>
            <person name="Stiekema W."/>
            <person name="Pohl T."/>
            <person name="Entian K.-D."/>
            <person name="Terryn N."/>
            <person name="Hartley N."/>
            <person name="Bent E."/>
            <person name="Johnson S."/>
            <person name="Langham S.-A."/>
            <person name="McCullagh B."/>
            <person name="Robben J."/>
            <person name="Grymonprez B."/>
            <person name="Zimmermann W."/>
            <person name="Ramsperger U."/>
            <person name="Wedler H."/>
            <person name="Balke K."/>
            <person name="Wedler E."/>
            <person name="Peters S."/>
            <person name="van Staveren M."/>
            <person name="Dirkse W."/>
            <person name="Mooijman P."/>
            <person name="Klein Lankhorst R."/>
            <person name="Weitzenegger T."/>
            <person name="Bothe G."/>
            <person name="Rose M."/>
            <person name="Hauf J."/>
            <person name="Berneiser S."/>
            <person name="Hempel S."/>
            <person name="Feldpausch M."/>
            <person name="Lamberth S."/>
            <person name="Villarroel R."/>
            <person name="Gielen J."/>
            <person name="Ardiles W."/>
            <person name="Bents O."/>
            <person name="Lemcke K."/>
            <person name="Kolesov G."/>
            <person name="Mayer K.F.X."/>
            <person name="Rudd S."/>
            <person name="Schoof H."/>
            <person name="Schueller C."/>
            <person name="Zaccaria P."/>
            <person name="Mewes H.-W."/>
            <person name="Bevan M."/>
            <person name="Fransz P.F."/>
        </authorList>
    </citation>
    <scope>NUCLEOTIDE SEQUENCE [LARGE SCALE GENOMIC DNA]</scope>
    <source>
        <strain>cv. Columbia</strain>
    </source>
</reference>
<reference key="2">
    <citation type="journal article" date="2017" name="Plant J.">
        <title>Araport11: a complete reannotation of the Arabidopsis thaliana reference genome.</title>
        <authorList>
            <person name="Cheng C.Y."/>
            <person name="Krishnakumar V."/>
            <person name="Chan A.P."/>
            <person name="Thibaud-Nissen F."/>
            <person name="Schobel S."/>
            <person name="Town C.D."/>
        </authorList>
    </citation>
    <scope>GENOME REANNOTATION</scope>
    <source>
        <strain>cv. Columbia</strain>
    </source>
</reference>
<reference key="3">
    <citation type="submission" date="2004-02" db="EMBL/GenBank/DDBJ databases">
        <title>Molecular cloning, expression, phylogenetic and functional characterization of the Arabidopsis AP2/EREBP transcription factor family.</title>
        <authorList>
            <person name="Pan Y."/>
            <person name="Gong W."/>
            <person name="Liu D."/>
            <person name="Fu Q."/>
            <person name="Mei W.-Q."/>
            <person name="Song W.-Q."/>
            <person name="Ma L.-G."/>
            <person name="Luo J.-C."/>
            <person name="Deng X.-W."/>
            <person name="Zhu Y.-X."/>
        </authorList>
    </citation>
    <scope>NUCLEOTIDE SEQUENCE [MRNA] OF 20-348</scope>
</reference>
<reference key="4">
    <citation type="journal article" date="2006" name="Plant Physiol.">
        <title>Genome-wide analysis of the ERF gene family in Arabidopsis and rice.</title>
        <authorList>
            <person name="Nakano T."/>
            <person name="Suzuki K."/>
            <person name="Fujimura T."/>
            <person name="Shinshi H."/>
        </authorList>
    </citation>
    <scope>GENE FAMILY</scope>
    <scope>NOMENCLATURE</scope>
</reference>
<reference key="5">
    <citation type="journal article" date="2007" name="Plant Cell">
        <title>The auxin-regulated AP2/EREBP gene PUCHI is required for morphogenesis in the early lateral root primordium of Arabidopsis.</title>
        <authorList>
            <person name="Hirota A."/>
            <person name="Kato T."/>
            <person name="Fukaki H."/>
            <person name="Aida M."/>
            <person name="Tasaka M."/>
        </authorList>
    </citation>
    <scope>FUNCTION</scope>
    <scope>SUBCELLULAR LOCATION</scope>
    <scope>DEVELOPMENTAL STAGE</scope>
    <scope>INDUCTION BY AUXIN</scope>
    <scope>DISRUPTION PHENOTYPE</scope>
</reference>
<reference key="6">
    <citation type="journal article" date="2009" name="Plant Cell">
        <title>A role for Arabidopsis PUCHI in floral meristem identity and bract suppression.</title>
        <authorList>
            <person name="Karim M.R."/>
            <person name="Hirota A."/>
            <person name="Kwiatkowska D."/>
            <person name="Tasaka M."/>
            <person name="Aida M."/>
        </authorList>
    </citation>
    <scope>FUNCTION</scope>
    <scope>DEVELOPMENTAL STAGE</scope>
    <scope>DISRUPTION PHENOTYPE</scope>
</reference>
<reference key="7">
    <citation type="journal article" date="2013" name="Plant Cell Physiol.">
        <title>The AP2/EREBP gene PUCHI Co-Acts with LBD16/ASL18 and LBD18/ASL20 downstream of ARF7 and ARF19 to regulate lateral root development in Arabidopsis.</title>
        <authorList>
            <person name="Kang N.Y."/>
            <person name="Lee H.W."/>
            <person name="Kim J."/>
        </authorList>
    </citation>
    <scope>FUNCTION</scope>
    <scope>INDUCTION BY AUXIN</scope>
</reference>